<protein>
    <recommendedName>
        <fullName>CRISPR-associated protein Csn2</fullName>
    </recommendedName>
</protein>
<dbReference type="EMBL" id="AEQQ01000063">
    <property type="protein sequence ID" value="EFV97264.1"/>
    <property type="molecule type" value="Genomic_DNA"/>
</dbReference>
<dbReference type="RefSeq" id="WP_000590708.1">
    <property type="nucleotide sequence ID" value="NZ_GL636070.1"/>
</dbReference>
<dbReference type="PDB" id="3QHQ">
    <property type="method" value="X-ray"/>
    <property type="resolution" value="2.00 A"/>
    <property type="chains" value="A/B=1-221"/>
</dbReference>
<dbReference type="PDBsum" id="3QHQ"/>
<dbReference type="SMR" id="E7S4M0"/>
<dbReference type="PATRIC" id="fig|888745.3.peg.1178"/>
<dbReference type="HOGENOM" id="CLU_109392_0_0_9"/>
<dbReference type="EvolutionaryTrace" id="E7S4M0"/>
<dbReference type="GO" id="GO:0003677">
    <property type="term" value="F:DNA binding"/>
    <property type="evidence" value="ECO:0007669"/>
    <property type="project" value="UniProtKB-KW"/>
</dbReference>
<dbReference type="GO" id="GO:0046872">
    <property type="term" value="F:metal ion binding"/>
    <property type="evidence" value="ECO:0007669"/>
    <property type="project" value="UniProtKB-KW"/>
</dbReference>
<dbReference type="GO" id="GO:0051607">
    <property type="term" value="P:defense response to virus"/>
    <property type="evidence" value="ECO:0007669"/>
    <property type="project" value="UniProtKB-KW"/>
</dbReference>
<dbReference type="CDD" id="cd09758">
    <property type="entry name" value="Csn2"/>
    <property type="match status" value="1"/>
</dbReference>
<dbReference type="Gene3D" id="3.40.50.11940">
    <property type="match status" value="2"/>
</dbReference>
<dbReference type="InterPro" id="IPR010146">
    <property type="entry name" value="CRISPR-assoc_prot_Csn2-typ"/>
</dbReference>
<dbReference type="InterPro" id="IPR038600">
    <property type="entry name" value="Csn2_sf"/>
</dbReference>
<dbReference type="NCBIfam" id="TIGR01866">
    <property type="entry name" value="cas_Csn2"/>
    <property type="match status" value="1"/>
</dbReference>
<dbReference type="Pfam" id="PF09711">
    <property type="entry name" value="Cas_Csn2"/>
    <property type="match status" value="1"/>
</dbReference>
<evidence type="ECO:0000250" key="1"/>
<evidence type="ECO:0000269" key="2">
    <source>
    </source>
</evidence>
<evidence type="ECO:0000305" key="3"/>
<evidence type="ECO:0007829" key="4">
    <source>
        <dbReference type="PDB" id="3QHQ"/>
    </source>
</evidence>
<gene>
    <name type="primary">csn2</name>
    <name type="ORF">HMPREF9171_1216</name>
</gene>
<keyword id="KW-0002">3D-structure</keyword>
<keyword id="KW-0051">Antiviral defense</keyword>
<keyword id="KW-0106">Calcium</keyword>
<keyword id="KW-0238">DNA-binding</keyword>
<keyword id="KW-0479">Metal-binding</keyword>
<organism>
    <name type="scientific">Streptococcus agalactiae (strain ATCC 13813 / DSM 2134 / JCM 5671 / CCUG 4208 / LMG 14694 / NCIMB 701348 / NCTC 8181 / G19)</name>
    <dbReference type="NCBI Taxonomy" id="888745"/>
    <lineage>
        <taxon>Bacteria</taxon>
        <taxon>Bacillati</taxon>
        <taxon>Bacillota</taxon>
        <taxon>Bacilli</taxon>
        <taxon>Lactobacillales</taxon>
        <taxon>Streptococcaceae</taxon>
        <taxon>Streptococcus</taxon>
    </lineage>
</organism>
<name>CSN2_STRA8</name>
<proteinExistence type="evidence at protein level"/>
<feature type="chain" id="PRO_0000418342" description="CRISPR-associated protein Csn2">
    <location>
        <begin position="1"/>
        <end position="221"/>
    </location>
</feature>
<feature type="binding site">
    <location>
        <position position="116"/>
    </location>
    <ligand>
        <name>Ca(2+)</name>
        <dbReference type="ChEBI" id="CHEBI:29108"/>
        <label>1</label>
    </ligand>
</feature>
<feature type="binding site">
    <location>
        <position position="118"/>
    </location>
    <ligand>
        <name>Ca(2+)</name>
        <dbReference type="ChEBI" id="CHEBI:29108"/>
        <label>1</label>
    </ligand>
</feature>
<feature type="binding site">
    <location>
        <position position="124"/>
    </location>
    <ligand>
        <name>Ca(2+)</name>
        <dbReference type="ChEBI" id="CHEBI:29108"/>
        <label>2</label>
    </ligand>
</feature>
<feature type="binding site">
    <location>
        <position position="139"/>
    </location>
    <ligand>
        <name>Ca(2+)</name>
        <dbReference type="ChEBI" id="CHEBI:29108"/>
        <label>3</label>
    </ligand>
</feature>
<feature type="binding site">
    <location>
        <position position="143"/>
    </location>
    <ligand>
        <name>Ca(2+)</name>
        <dbReference type="ChEBI" id="CHEBI:29108"/>
        <label>3</label>
    </ligand>
</feature>
<feature type="binding site">
    <location>
        <position position="151"/>
    </location>
    <ligand>
        <name>Ca(2+)</name>
        <dbReference type="ChEBI" id="CHEBI:29108"/>
        <label>3</label>
    </ligand>
</feature>
<feature type="mutagenesis site" description="Alters binding of dsDNA but does not abolish it." evidence="2">
    <original>Y</original>
    <variation>A</variation>
    <variation>W</variation>
    <location>
        <position position="29"/>
    </location>
</feature>
<feature type="mutagenesis site" description="Abolishes dsDNA binding." evidence="2">
    <original>K</original>
    <variation>A</variation>
    <location>
        <position position="132"/>
    </location>
</feature>
<feature type="mutagenesis site" description="Alters binding of dsDNA but does not abolish it." evidence="2">
    <original>RR</original>
    <variation>AA</variation>
    <location>
        <begin position="199"/>
        <end position="200"/>
    </location>
</feature>
<feature type="strand" evidence="4">
    <location>
        <begin position="2"/>
        <end position="5"/>
    </location>
</feature>
<feature type="strand" evidence="4">
    <location>
        <begin position="9"/>
        <end position="11"/>
    </location>
</feature>
<feature type="strand" evidence="4">
    <location>
        <begin position="13"/>
        <end position="15"/>
    </location>
</feature>
<feature type="strand" evidence="4">
    <location>
        <begin position="17"/>
        <end position="23"/>
    </location>
</feature>
<feature type="helix" evidence="4">
    <location>
        <begin position="26"/>
        <end position="38"/>
    </location>
</feature>
<feature type="strand" evidence="4">
    <location>
        <begin position="46"/>
        <end position="48"/>
    </location>
</feature>
<feature type="helix" evidence="4">
    <location>
        <begin position="57"/>
        <end position="59"/>
    </location>
</feature>
<feature type="strand" evidence="4">
    <location>
        <begin position="60"/>
        <end position="64"/>
    </location>
</feature>
<feature type="turn" evidence="4">
    <location>
        <begin position="66"/>
        <end position="68"/>
    </location>
</feature>
<feature type="helix" evidence="4">
    <location>
        <begin position="74"/>
        <end position="89"/>
    </location>
</feature>
<feature type="helix" evidence="4">
    <location>
        <begin position="92"/>
        <end position="115"/>
    </location>
</feature>
<feature type="strand" evidence="4">
    <location>
        <begin position="116"/>
        <end position="118"/>
    </location>
</feature>
<feature type="helix" evidence="4">
    <location>
        <begin position="127"/>
        <end position="134"/>
    </location>
</feature>
<feature type="helix" evidence="4">
    <location>
        <begin position="145"/>
        <end position="158"/>
    </location>
</feature>
<feature type="strand" evidence="4">
    <location>
        <begin position="164"/>
        <end position="169"/>
    </location>
</feature>
<feature type="helix" evidence="4">
    <location>
        <begin position="171"/>
        <end position="173"/>
    </location>
</feature>
<feature type="helix" evidence="4">
    <location>
        <begin position="176"/>
        <end position="189"/>
    </location>
</feature>
<feature type="strand" evidence="4">
    <location>
        <begin position="193"/>
        <end position="199"/>
    </location>
</feature>
<feature type="strand" evidence="4">
    <location>
        <begin position="207"/>
        <end position="209"/>
    </location>
</feature>
<feature type="strand" evidence="4">
    <location>
        <begin position="215"/>
        <end position="217"/>
    </location>
</feature>
<sequence length="221" mass="25650">MIKINFPILDEPLVLSNATILTIEDVSVYSSLVKHFYQYDVDEHLKLFDDKQKSLKATELMLVTDILGYDVNSAPILKLIHGDLENQFNEKPEVKSMVEKLAATITELIAFECLENELDLEYDEITILELIKVLGVKIETQSDTIFEKCFEIIQVYNYLTKKNLLVFVNSGAYLTKDEVIKLCEYINLMQKSVLFLEPRRLYDLPQYVIDKDYFLIGENMV</sequence>
<comment type="function">
    <text evidence="1">CRISPR (clustered regularly interspaced short palindromic repeat), is an adaptive immune system that provides protection against mobile genetic elements (viruses, transposable elements and conjugative plasmids). CRISPR clusters contain sequences complementary to antecedent mobile elements and target invading nucleic acids. CRISPR clusters are transcribed and processed into CRISPR RNA (crRNA) (By similarity). Binds dsDNA, binding is disrupted by EGTA.</text>
</comment>
<comment type="cofactor">
    <cofactor evidence="2">
        <name>Ca(2+)</name>
        <dbReference type="ChEBI" id="CHEBI:29108"/>
    </cofactor>
</comment>
<comment type="subunit">
    <text evidence="2">Homodimer, in solution forms homotetramers.</text>
</comment>
<comment type="similarity">
    <text evidence="3">Belongs to the CRISPR-associated Csn2 protein family.</text>
</comment>
<reference key="1">
    <citation type="submission" date="2010-12" db="EMBL/GenBank/DDBJ databases">
        <authorList>
            <person name="Muzny D."/>
            <person name="Qin X."/>
            <person name="Deng J."/>
            <person name="Jiang H."/>
            <person name="Liu Y."/>
            <person name="Qu J."/>
            <person name="Song X.-Z."/>
            <person name="Zhang L."/>
            <person name="Thornton R."/>
            <person name="Coyle M."/>
            <person name="Francisco L."/>
            <person name="Jackson L."/>
            <person name="Javaid M."/>
            <person name="Korchina V."/>
            <person name="Kovar C."/>
            <person name="Mata R."/>
            <person name="Mathew T."/>
            <person name="Ngo R."/>
            <person name="Nguyen L."/>
            <person name="Nguyen N."/>
            <person name="Okwuonu G."/>
            <person name="Ongeri F."/>
            <person name="Pham C."/>
            <person name="Simmons D."/>
            <person name="Wilczek-Boney K."/>
            <person name="Hale W."/>
            <person name="Jakkamsetti A."/>
            <person name="Pham P."/>
            <person name="Ruth R."/>
            <person name="San Lucas F."/>
            <person name="Warren J."/>
            <person name="Zhang J."/>
            <person name="Zhao Z."/>
            <person name="Zhou C."/>
            <person name="Zhu D."/>
            <person name="Lee S."/>
            <person name="Bess C."/>
            <person name="Blankenburg K."/>
            <person name="Forbes L."/>
            <person name="Fu Q."/>
            <person name="Gubbala S."/>
            <person name="Hirani K."/>
            <person name="Jayaseelan J.C."/>
            <person name="Lara F."/>
            <person name="Munidasa M."/>
            <person name="Palculict T."/>
            <person name="Patil S."/>
            <person name="Pu L.-L."/>
            <person name="Saada N."/>
            <person name="Tang L."/>
            <person name="Weissenberger G."/>
            <person name="Zhu Y."/>
            <person name="Hemphill L."/>
            <person name="Shang Y."/>
            <person name="Youmans B."/>
            <person name="Ayvaz T."/>
            <person name="Ross M."/>
            <person name="Santibanez J."/>
            <person name="Aqrawi P."/>
            <person name="Gross S."/>
            <person name="Joshi V."/>
            <person name="Fowler G."/>
            <person name="Nazareth L."/>
            <person name="Reid J."/>
            <person name="Worley K."/>
            <person name="Petrosino J."/>
            <person name="Highlander S."/>
            <person name="Gibbs R."/>
        </authorList>
    </citation>
    <scope>NUCLEOTIDE SEQUENCE [LARGE SCALE GENOMIC DNA]</scope>
    <source>
        <strain>ATCC 13813 / DSM 2134 / JCM 5671 / CCUG 4208 / LMG 14694 / NCIMB 701348 / NCTC 8181 / G19</strain>
    </source>
</reference>
<reference key="2">
    <citation type="journal article" date="2012" name="J. Struct. Biol.">
        <title>The crystal structure of the CRISPR-associated protein Csn2 from Streptococcus agalactiae.</title>
        <authorList>
            <person name="Ellinger P."/>
            <person name="Arslan Z."/>
            <person name="Wurm R."/>
            <person name="Tschapek B."/>
            <person name="Mackenzie C."/>
            <person name="Pfeffer K."/>
            <person name="Panjikar S."/>
            <person name="Wagner R."/>
            <person name="Schmitt L."/>
            <person name="Gohlke H."/>
            <person name="Pul U."/>
            <person name="Smits S.H."/>
        </authorList>
    </citation>
    <scope>X-RAY CRYSTALLOGRAPHY (2.00 ANGSTROMS) OF 3-221</scope>
    <scope>COFACTOR</scope>
    <scope>SUBUNIT</scope>
    <scope>DNA-BINDING</scope>
    <scope>MUTAGENESIS OF TYR-29; LYS-132 AND 199-ARG-ARG-200</scope>
    <source>
        <strain>ATCC 13813 / DSM 2134 / JCM 5671 / CCUG 4208 / LMG 14694 / NCIMB 701348 / NCTC 8181 / G19</strain>
    </source>
</reference>
<accession>E7S4M0</accession>